<evidence type="ECO:0000255" key="1"/>
<evidence type="ECO:0000269" key="2">
    <source>
    </source>
</evidence>
<evidence type="ECO:0000303" key="3">
    <source>
    </source>
</evidence>
<evidence type="ECO:0000305" key="4"/>
<protein>
    <recommendedName>
        <fullName>FMRFamide-8</fullName>
    </recommendedName>
    <alternativeName>
        <fullName evidence="3">LucFMRFamide-8</fullName>
    </alternativeName>
</protein>
<keyword id="KW-0027">Amidation</keyword>
<keyword id="KW-0903">Direct protein sequencing</keyword>
<keyword id="KW-0527">Neuropeptide</keyword>
<keyword id="KW-0964">Secreted</keyword>
<dbReference type="GO" id="GO:0005576">
    <property type="term" value="C:extracellular region"/>
    <property type="evidence" value="ECO:0007669"/>
    <property type="project" value="UniProtKB-SubCell"/>
</dbReference>
<dbReference type="GO" id="GO:0007218">
    <property type="term" value="P:neuropeptide signaling pathway"/>
    <property type="evidence" value="ECO:0007669"/>
    <property type="project" value="UniProtKB-KW"/>
</dbReference>
<name>FAR8_LUCCU</name>
<feature type="peptide" id="PRO_0000371753" description="FMRFamide-8">
    <location>
        <begin position="1"/>
        <end position="9"/>
    </location>
</feature>
<feature type="modified residue" description="Phenylalanine amide" evidence="2">
    <location>
        <position position="9"/>
    </location>
</feature>
<comment type="subcellular location">
    <subcellularLocation>
        <location evidence="4">Secreted</location>
    </subcellularLocation>
</comment>
<comment type="tissue specificity">
    <text evidence="2">Detected in the thoracic perisympathetic organs in larvae, and the dorsal ganglionic sheath in adults (at protein level).</text>
</comment>
<comment type="mass spectrometry" mass="1041.51" method="MALDI" evidence="2"/>
<comment type="similarity">
    <text evidence="1">Belongs to the FARP (FMRFamide related peptide) family.</text>
</comment>
<organism>
    <name type="scientific">Lucilia cuprina</name>
    <name type="common">Green bottle fly</name>
    <name type="synonym">Australian sheep blowfly</name>
    <dbReference type="NCBI Taxonomy" id="7375"/>
    <lineage>
        <taxon>Eukaryota</taxon>
        <taxon>Metazoa</taxon>
        <taxon>Ecdysozoa</taxon>
        <taxon>Arthropoda</taxon>
        <taxon>Hexapoda</taxon>
        <taxon>Insecta</taxon>
        <taxon>Pterygota</taxon>
        <taxon>Neoptera</taxon>
        <taxon>Endopterygota</taxon>
        <taxon>Diptera</taxon>
        <taxon>Brachycera</taxon>
        <taxon>Muscomorpha</taxon>
        <taxon>Oestroidea</taxon>
        <taxon>Calliphoridae</taxon>
        <taxon>Luciliinae</taxon>
        <taxon>Lucilia</taxon>
    </lineage>
</organism>
<accession>P85455</accession>
<reference evidence="4" key="1">
    <citation type="journal article" date="2009" name="Gen. Comp. Endocrinol.">
        <title>Extended FMRFamides in dipteran insects: conservative expression in the neuroendocrine system is accompanied by rapid sequence evolution.</title>
        <authorList>
            <person name="Rahman M.M."/>
            <person name="Fromm B."/>
            <person name="Neupert S."/>
            <person name="Kreusch S."/>
            <person name="Predel R."/>
        </authorList>
    </citation>
    <scope>PROTEIN SEQUENCE</scope>
    <scope>TISSUE SPECIFICITY</scope>
    <scope>MASS SPECTROMETRY</scope>
    <scope>AMIDATION AT PHE-9</scope>
    <source>
        <strain evidence="2">Bangladesh</strain>
        <strain evidence="2">Goondiwindi</strain>
        <tissue evidence="2">Dorsal ganglionic sheath</tissue>
    </source>
</reference>
<proteinExistence type="evidence at protein level"/>
<sequence length="9" mass="1042">AAGQDFMRF</sequence>